<organism>
    <name type="scientific">Populus euphratica</name>
    <name type="common">Euphrates poplar</name>
    <dbReference type="NCBI Taxonomy" id="75702"/>
    <lineage>
        <taxon>Eukaryota</taxon>
        <taxon>Viridiplantae</taxon>
        <taxon>Streptophyta</taxon>
        <taxon>Embryophyta</taxon>
        <taxon>Tracheophyta</taxon>
        <taxon>Spermatophyta</taxon>
        <taxon>Magnoliopsida</taxon>
        <taxon>eudicotyledons</taxon>
        <taxon>Gunneridae</taxon>
        <taxon>Pentapetalae</taxon>
        <taxon>rosids</taxon>
        <taxon>fabids</taxon>
        <taxon>Malpighiales</taxon>
        <taxon>Salicaceae</taxon>
        <taxon>Saliceae</taxon>
        <taxon>Populus</taxon>
    </lineage>
</organism>
<reference key="1">
    <citation type="journal article" date="2006" name="Ann. Bot.">
        <title>Proteome profiling of Populus euphratica Oliv. upon heat stress.</title>
        <authorList>
            <person name="Ferreira S."/>
            <person name="Hjernoe K."/>
            <person name="Larsen M."/>
            <person name="Wingsle G."/>
            <person name="Larsen P."/>
            <person name="Fey S."/>
            <person name="Roepstorff P."/>
            <person name="Pais M.S."/>
        </authorList>
    </citation>
    <scope>PROTEIN SEQUENCE</scope>
    <source>
        <tissue>Leaf</tissue>
    </source>
</reference>
<feature type="chain" id="PRO_0000160202" description="NADP-dependent malic enzyme">
    <location>
        <begin position="1" status="less than"/>
        <end position="23" status="greater than"/>
    </location>
</feature>
<feature type="non-consecutive residues" evidence="3">
    <location>
        <begin position="12"/>
        <end position="13"/>
    </location>
</feature>
<feature type="non-terminal residue">
    <location>
        <position position="1"/>
    </location>
</feature>
<feature type="non-terminal residue">
    <location>
        <position position="23"/>
    </location>
</feature>
<comment type="catalytic activity">
    <reaction evidence="1">
        <text>(S)-malate + NADP(+) = pyruvate + CO2 + NADPH</text>
        <dbReference type="Rhea" id="RHEA:18253"/>
        <dbReference type="ChEBI" id="CHEBI:15361"/>
        <dbReference type="ChEBI" id="CHEBI:15589"/>
        <dbReference type="ChEBI" id="CHEBI:16526"/>
        <dbReference type="ChEBI" id="CHEBI:57783"/>
        <dbReference type="ChEBI" id="CHEBI:58349"/>
        <dbReference type="EC" id="1.1.1.40"/>
    </reaction>
</comment>
<comment type="catalytic activity">
    <reaction>
        <text>oxaloacetate + H(+) = pyruvate + CO2</text>
        <dbReference type="Rhea" id="RHEA:15641"/>
        <dbReference type="ChEBI" id="CHEBI:15361"/>
        <dbReference type="ChEBI" id="CHEBI:15378"/>
        <dbReference type="ChEBI" id="CHEBI:16452"/>
        <dbReference type="ChEBI" id="CHEBI:16526"/>
        <dbReference type="EC" id="1.1.1.40"/>
    </reaction>
</comment>
<comment type="subunit">
    <text evidence="1">Homotetramer.</text>
</comment>
<comment type="similarity">
    <text evidence="2">Belongs to the malic enzymes family.</text>
</comment>
<accession>P84539</accession>
<proteinExistence type="evidence at protein level"/>
<sequence length="23" mass="2540">SIQVIVVTDGERGLIYPPLSNIR</sequence>
<name>MAOX_POPEU</name>
<protein>
    <recommendedName>
        <fullName>NADP-dependent malic enzyme</fullName>
        <shortName>NADP-ME</shortName>
        <ecNumber>1.1.1.40</ecNumber>
    </recommendedName>
</protein>
<dbReference type="EC" id="1.1.1.40"/>
<dbReference type="Proteomes" id="UP000694918">
    <property type="component" value="Unplaced"/>
</dbReference>
<dbReference type="GO" id="GO:0004473">
    <property type="term" value="F:malate dehydrogenase (decarboxylating) (NADP+) activity"/>
    <property type="evidence" value="ECO:0007669"/>
    <property type="project" value="UniProtKB-EC"/>
</dbReference>
<dbReference type="GO" id="GO:0008948">
    <property type="term" value="F:oxaloacetate decarboxylase activity"/>
    <property type="evidence" value="ECO:0007669"/>
    <property type="project" value="RHEA"/>
</dbReference>
<evidence type="ECO:0000250" key="1">
    <source>
        <dbReference type="UniProtKB" id="P22178"/>
    </source>
</evidence>
<evidence type="ECO:0000255" key="2"/>
<evidence type="ECO:0000305" key="3"/>
<keyword id="KW-0903">Direct protein sequencing</keyword>
<keyword id="KW-0521">NADP</keyword>
<keyword id="KW-0560">Oxidoreductase</keyword>
<keyword id="KW-1185">Reference proteome</keyword>